<evidence type="ECO:0000255" key="1">
    <source>
        <dbReference type="HAMAP-Rule" id="MF_00600"/>
    </source>
</evidence>
<evidence type="ECO:0000305" key="2"/>
<proteinExistence type="inferred from homology"/>
<dbReference type="EC" id="5.6.1.7" evidence="1"/>
<dbReference type="EMBL" id="AE015925">
    <property type="protein sequence ID" value="AAP05719.1"/>
    <property type="molecule type" value="Genomic_DNA"/>
</dbReference>
<dbReference type="RefSeq" id="WP_011006932.1">
    <property type="nucleotide sequence ID" value="NC_003361.3"/>
</dbReference>
<dbReference type="SMR" id="P59698"/>
<dbReference type="STRING" id="227941.CCA_00980"/>
<dbReference type="KEGG" id="cca:CCA_00980"/>
<dbReference type="eggNOG" id="COG0459">
    <property type="taxonomic scope" value="Bacteria"/>
</dbReference>
<dbReference type="HOGENOM" id="CLU_016503_6_1_0"/>
<dbReference type="OrthoDB" id="9766614at2"/>
<dbReference type="Proteomes" id="UP000002193">
    <property type="component" value="Chromosome"/>
</dbReference>
<dbReference type="GO" id="GO:0005737">
    <property type="term" value="C:cytoplasm"/>
    <property type="evidence" value="ECO:0007669"/>
    <property type="project" value="UniProtKB-SubCell"/>
</dbReference>
<dbReference type="GO" id="GO:0005524">
    <property type="term" value="F:ATP binding"/>
    <property type="evidence" value="ECO:0007669"/>
    <property type="project" value="UniProtKB-KW"/>
</dbReference>
<dbReference type="GO" id="GO:0140662">
    <property type="term" value="F:ATP-dependent protein folding chaperone"/>
    <property type="evidence" value="ECO:0007669"/>
    <property type="project" value="InterPro"/>
</dbReference>
<dbReference type="GO" id="GO:0016853">
    <property type="term" value="F:isomerase activity"/>
    <property type="evidence" value="ECO:0007669"/>
    <property type="project" value="UniProtKB-KW"/>
</dbReference>
<dbReference type="GO" id="GO:0042026">
    <property type="term" value="P:protein refolding"/>
    <property type="evidence" value="ECO:0007669"/>
    <property type="project" value="InterPro"/>
</dbReference>
<dbReference type="CDD" id="cd03344">
    <property type="entry name" value="GroEL"/>
    <property type="match status" value="1"/>
</dbReference>
<dbReference type="FunFam" id="3.50.7.10:FF:000001">
    <property type="entry name" value="60 kDa chaperonin"/>
    <property type="match status" value="1"/>
</dbReference>
<dbReference type="Gene3D" id="3.50.7.10">
    <property type="entry name" value="GroEL"/>
    <property type="match status" value="1"/>
</dbReference>
<dbReference type="Gene3D" id="1.10.560.10">
    <property type="entry name" value="GroEL-like equatorial domain"/>
    <property type="match status" value="1"/>
</dbReference>
<dbReference type="Gene3D" id="3.30.260.10">
    <property type="entry name" value="TCP-1-like chaperonin intermediate domain"/>
    <property type="match status" value="1"/>
</dbReference>
<dbReference type="InterPro" id="IPR001844">
    <property type="entry name" value="Cpn60/GroEL"/>
</dbReference>
<dbReference type="InterPro" id="IPR002423">
    <property type="entry name" value="Cpn60/GroEL/TCP-1"/>
</dbReference>
<dbReference type="InterPro" id="IPR027409">
    <property type="entry name" value="GroEL-like_apical_dom_sf"/>
</dbReference>
<dbReference type="InterPro" id="IPR027413">
    <property type="entry name" value="GROEL-like_equatorial_sf"/>
</dbReference>
<dbReference type="InterPro" id="IPR027410">
    <property type="entry name" value="TCP-1-like_intermed_sf"/>
</dbReference>
<dbReference type="NCBIfam" id="NF000592">
    <property type="entry name" value="PRK00013.1"/>
    <property type="match status" value="1"/>
</dbReference>
<dbReference type="NCBIfam" id="NF009487">
    <property type="entry name" value="PRK12849.1"/>
    <property type="match status" value="1"/>
</dbReference>
<dbReference type="NCBIfam" id="NF009488">
    <property type="entry name" value="PRK12850.1"/>
    <property type="match status" value="1"/>
</dbReference>
<dbReference type="NCBIfam" id="NF009489">
    <property type="entry name" value="PRK12851.1"/>
    <property type="match status" value="1"/>
</dbReference>
<dbReference type="PANTHER" id="PTHR45633">
    <property type="entry name" value="60 KDA HEAT SHOCK PROTEIN, MITOCHONDRIAL"/>
    <property type="match status" value="1"/>
</dbReference>
<dbReference type="Pfam" id="PF00118">
    <property type="entry name" value="Cpn60_TCP1"/>
    <property type="match status" value="1"/>
</dbReference>
<dbReference type="PRINTS" id="PR00298">
    <property type="entry name" value="CHAPERONIN60"/>
</dbReference>
<dbReference type="SUPFAM" id="SSF52029">
    <property type="entry name" value="GroEL apical domain-like"/>
    <property type="match status" value="1"/>
</dbReference>
<dbReference type="SUPFAM" id="SSF48592">
    <property type="entry name" value="GroEL equatorial domain-like"/>
    <property type="match status" value="1"/>
</dbReference>
<dbReference type="SUPFAM" id="SSF54849">
    <property type="entry name" value="GroEL-intermediate domain like"/>
    <property type="match status" value="1"/>
</dbReference>
<gene>
    <name evidence="1" type="primary">groEL2</name>
    <name type="synonym">groEL-2</name>
    <name evidence="1" type="synonym">groL2</name>
    <name type="ordered locus">CCA_00980</name>
</gene>
<keyword id="KW-0067">ATP-binding</keyword>
<keyword id="KW-0143">Chaperone</keyword>
<keyword id="KW-0963">Cytoplasm</keyword>
<keyword id="KW-0413">Isomerase</keyword>
<keyword id="KW-0547">Nucleotide-binding</keyword>
<name>CH602_CHLCV</name>
<sequence length="536" mass="57849">MSKIFKNRLEGLRALNRGVRALAKAVTSTLGPQGSHVVIKKDHSSPYVTKQGASIAKEIILPDAFENTGLKLIKEAALQMEAQVGDGSTTAIVLTDALFASGLKGVAVGLDPLEIKQGIQLAGAMLDEELAKLVVKISESEDIFHIATSSANHDAAIGKILADAIAQIGIEGVLSIKEGRGTETTLQATRHVGLNSGYLSSYFVTHPETMEVIYEDASILLCNQALSCLNQSFIHFLEQTFQTNRKPLIIIAEDFDPELLSILIVNKLKGNLPVCAIKAPGYGQQCKETLEDIAILTGATLVGDLLGISLSESSLDVLGRVEKIIVKRNTTIFSGGKGNQESLEQRIDYLRQAIVQSSSEMDTQDLEKRLARFVGGVAQIYLGSATENEYKERKIRLESALKAVKAAFKEGCLPGGGVALARAASIIKIPNELPIGVMFGCKCMLQSAEEPLRVLATNCGKDPEYVVDTVLKHADPYFGYNCINDSFENLITSGVFDPFSVTKCALKYSISISCLLLTSSFFIVDSSEKMQNPPLF</sequence>
<accession>P59698</accession>
<protein>
    <recommendedName>
        <fullName evidence="1">Chaperonin GroEL 2</fullName>
        <ecNumber evidence="1">5.6.1.7</ecNumber>
    </recommendedName>
    <alternativeName>
        <fullName evidence="1">60 kDa chaperonin 2</fullName>
    </alternativeName>
    <alternativeName>
        <fullName evidence="1">Chaperonin-60 2</fullName>
        <shortName evidence="1">Cpn60 2</shortName>
    </alternativeName>
</protein>
<organism>
    <name type="scientific">Chlamydia caviae (strain ATCC VR-813 / DSM 19441 / 03DC25 / GPIC)</name>
    <name type="common">Chlamydophila caviae</name>
    <dbReference type="NCBI Taxonomy" id="227941"/>
    <lineage>
        <taxon>Bacteria</taxon>
        <taxon>Pseudomonadati</taxon>
        <taxon>Chlamydiota</taxon>
        <taxon>Chlamydiia</taxon>
        <taxon>Chlamydiales</taxon>
        <taxon>Chlamydiaceae</taxon>
        <taxon>Chlamydia/Chlamydophila group</taxon>
        <taxon>Chlamydia</taxon>
    </lineage>
</organism>
<comment type="function">
    <text evidence="1">Together with its co-chaperonin GroES, plays an essential role in assisting protein folding. The GroEL-GroES system forms a nano-cage that allows encapsulation of the non-native substrate proteins and provides a physical environment optimized to promote and accelerate protein folding.</text>
</comment>
<comment type="catalytic activity">
    <reaction evidence="1">
        <text>ATP + H2O + a folded polypeptide = ADP + phosphate + an unfolded polypeptide.</text>
        <dbReference type="EC" id="5.6.1.7"/>
    </reaction>
</comment>
<comment type="subunit">
    <text evidence="1">Forms a cylinder of 14 subunits composed of two heptameric rings stacked back-to-back. Interacts with the co-chaperonin GroES.</text>
</comment>
<comment type="subcellular location">
    <subcellularLocation>
        <location evidence="1">Cytoplasm</location>
    </subcellularLocation>
</comment>
<comment type="similarity">
    <text evidence="1 2">Belongs to the chaperonin (HSP60) family.</text>
</comment>
<reference key="1">
    <citation type="journal article" date="2003" name="Nucleic Acids Res.">
        <title>Genome sequence of Chlamydophila caviae (Chlamydia psittaci GPIC): examining the role of niche-specific genes in the evolution of the Chlamydiaceae.</title>
        <authorList>
            <person name="Read T.D."/>
            <person name="Myers G.S.A."/>
            <person name="Brunham R.C."/>
            <person name="Nelson W.C."/>
            <person name="Paulsen I.T."/>
            <person name="Heidelberg J.F."/>
            <person name="Holtzapple E.K."/>
            <person name="Khouri H.M."/>
            <person name="Federova N.B."/>
            <person name="Carty H.A."/>
            <person name="Umayam L.A."/>
            <person name="Haft D.H."/>
            <person name="Peterson J.D."/>
            <person name="Beanan M.J."/>
            <person name="White O."/>
            <person name="Salzberg S.L."/>
            <person name="Hsia R.-C."/>
            <person name="McClarty G."/>
            <person name="Rank R.G."/>
            <person name="Bavoil P.M."/>
            <person name="Fraser C.M."/>
        </authorList>
    </citation>
    <scope>NUCLEOTIDE SEQUENCE [LARGE SCALE GENOMIC DNA]</scope>
    <source>
        <strain>ATCC VR-813 / DSM 19441 / 03DC25 / GPIC</strain>
    </source>
</reference>
<feature type="chain" id="PRO_0000063330" description="Chaperonin GroEL 2">
    <location>
        <begin position="1"/>
        <end position="536"/>
    </location>
</feature>
<feature type="binding site" evidence="1">
    <location>
        <begin position="29"/>
        <end position="32"/>
    </location>
    <ligand>
        <name>ATP</name>
        <dbReference type="ChEBI" id="CHEBI:30616"/>
    </ligand>
</feature>
<feature type="binding site" evidence="1">
    <location>
        <position position="50"/>
    </location>
    <ligand>
        <name>ATP</name>
        <dbReference type="ChEBI" id="CHEBI:30616"/>
    </ligand>
</feature>
<feature type="binding site" evidence="1">
    <location>
        <position position="416"/>
    </location>
    <ligand>
        <name>ATP</name>
        <dbReference type="ChEBI" id="CHEBI:30616"/>
    </ligand>
</feature>
<feature type="binding site" evidence="1">
    <location>
        <position position="497"/>
    </location>
    <ligand>
        <name>ATP</name>
        <dbReference type="ChEBI" id="CHEBI:30616"/>
    </ligand>
</feature>